<feature type="chain" id="PRO_0000212620" description="Divalent metal cation transporter MntH">
    <location>
        <begin position="1"/>
        <end position="464"/>
    </location>
</feature>
<feature type="transmembrane region" description="Helical" evidence="1">
    <location>
        <begin position="57"/>
        <end position="77"/>
    </location>
</feature>
<feature type="transmembrane region" description="Helical" evidence="1">
    <location>
        <begin position="82"/>
        <end position="102"/>
    </location>
</feature>
<feature type="transmembrane region" description="Helical" evidence="1">
    <location>
        <begin position="125"/>
        <end position="145"/>
    </location>
</feature>
<feature type="transmembrane region" description="Helical" evidence="1">
    <location>
        <begin position="157"/>
        <end position="177"/>
    </location>
</feature>
<feature type="transmembrane region" description="Helical" evidence="1">
    <location>
        <begin position="186"/>
        <end position="206"/>
    </location>
</feature>
<feature type="transmembrane region" description="Helical" evidence="1">
    <location>
        <begin position="229"/>
        <end position="249"/>
    </location>
</feature>
<feature type="transmembrane region" description="Helical" evidence="1">
    <location>
        <begin position="281"/>
        <end position="301"/>
    </location>
</feature>
<feature type="transmembrane region" description="Helical" evidence="1">
    <location>
        <begin position="321"/>
        <end position="341"/>
    </location>
</feature>
<feature type="transmembrane region" description="Helical" evidence="1">
    <location>
        <begin position="376"/>
        <end position="396"/>
    </location>
</feature>
<feature type="transmembrane region" description="Helical" evidence="1">
    <location>
        <begin position="399"/>
        <end position="419"/>
    </location>
</feature>
<feature type="transmembrane region" description="Helical" evidence="1">
    <location>
        <begin position="443"/>
        <end position="463"/>
    </location>
</feature>
<reference key="1">
    <citation type="journal article" date="2001" name="Appl. Microbiol. Biotechnol.">
        <title>Molecular cloning of a putative divalent-cation transporter gene as a new genetic marker for the identification of Lactobacillus brevis strains capable of growing in beer.</title>
        <authorList>
            <person name="Hayashi N."/>
            <person name="Ito M."/>
            <person name="Horiike S."/>
            <person name="Taguchi H."/>
        </authorList>
    </citation>
    <scope>NUCLEOTIDE SEQUENCE [GENOMIC DNA]</scope>
    <scope>INDUCTION</scope>
    <source>
        <strain>L578Y</strain>
    </source>
</reference>
<sequence>MKEGIDMRESVAEEPKHKFFQSTEGENKSLDEVNGSVKVPKNAGFWRTLFAYTGPGILIAVGYMDPGNWITSIAGGAQFKYSLLSVILISSLIAMLLQSMAARLGIVTGKDLAQLTRERTSKTMGIILWLITESAIMATDVAEIIGSGIAIKLLFNIPLVVGILITTADVLILLLLMKLGFRKIEAIVATLVAVILLVFTYEVFLAGPQLDQMFAGYMPTKDIVTNKSMLYLALGIVGATVMPHDLYLGSSISQTRAVDRHDRQDVAKAIKFTTIDSNLQLTIAFIVNSLLLILGAALFFGTNSTVGRFVDLFNSLNNSHIVGAIASPMLSMLFAVALLSSGQSSTITGTLSGQIIMEGFIHLRMPLWAQRLLTRLLSVTPVLIFAIYYHGNEAKIENLLTLSQVFLSVALPFAIVPLVKFTSSKELMGEFVNKAWVKYSAWVATVVLVSLNIYLILQTVGVIG</sequence>
<name>MNTH_LEVBR</name>
<organism>
    <name type="scientific">Levilactobacillus brevis</name>
    <name type="common">Lactobacillus brevis</name>
    <dbReference type="NCBI Taxonomy" id="1580"/>
    <lineage>
        <taxon>Bacteria</taxon>
        <taxon>Bacillati</taxon>
        <taxon>Bacillota</taxon>
        <taxon>Bacilli</taxon>
        <taxon>Lactobacillales</taxon>
        <taxon>Lactobacillaceae</taxon>
        <taxon>Levilactobacillus</taxon>
    </lineage>
</organism>
<gene>
    <name evidence="1" type="primary">mntH</name>
    <name type="synonym">hitA</name>
</gene>
<keyword id="KW-1003">Cell membrane</keyword>
<keyword id="KW-0406">Ion transport</keyword>
<keyword id="KW-0472">Membrane</keyword>
<keyword id="KW-0769">Symport</keyword>
<keyword id="KW-0812">Transmembrane</keyword>
<keyword id="KW-1133">Transmembrane helix</keyword>
<keyword id="KW-0813">Transport</keyword>
<comment type="function">
    <text evidence="1">H(+)-stimulated, divalent metal cation uptake system.</text>
</comment>
<comment type="subcellular location">
    <subcellularLocation>
        <location evidence="1">Cell membrane</location>
        <topology evidence="1">Multi-pass membrane protein</topology>
    </subcellularLocation>
</comment>
<comment type="induction">
    <text evidence="2">In response to bitter compounds derived from hops.</text>
</comment>
<comment type="similarity">
    <text evidence="1">Belongs to the NRAMP family.</text>
</comment>
<evidence type="ECO:0000255" key="1">
    <source>
        <dbReference type="HAMAP-Rule" id="MF_00221"/>
    </source>
</evidence>
<evidence type="ECO:0000269" key="2">
    <source>
    </source>
</evidence>
<proteinExistence type="evidence at transcript level"/>
<protein>
    <recommendedName>
        <fullName evidence="1">Divalent metal cation transporter MntH</fullName>
    </recommendedName>
</protein>
<dbReference type="EMBL" id="AB035808">
    <property type="protein sequence ID" value="BAB47552.1"/>
    <property type="molecule type" value="Genomic_DNA"/>
</dbReference>
<dbReference type="SMR" id="Q93V04"/>
<dbReference type="GO" id="GO:0005886">
    <property type="term" value="C:plasma membrane"/>
    <property type="evidence" value="ECO:0007669"/>
    <property type="project" value="UniProtKB-SubCell"/>
</dbReference>
<dbReference type="GO" id="GO:0015086">
    <property type="term" value="F:cadmium ion transmembrane transporter activity"/>
    <property type="evidence" value="ECO:0007669"/>
    <property type="project" value="TreeGrafter"/>
</dbReference>
<dbReference type="GO" id="GO:0005384">
    <property type="term" value="F:manganese ion transmembrane transporter activity"/>
    <property type="evidence" value="ECO:0007669"/>
    <property type="project" value="TreeGrafter"/>
</dbReference>
<dbReference type="GO" id="GO:0046872">
    <property type="term" value="F:metal ion binding"/>
    <property type="evidence" value="ECO:0007669"/>
    <property type="project" value="UniProtKB-UniRule"/>
</dbReference>
<dbReference type="GO" id="GO:0015293">
    <property type="term" value="F:symporter activity"/>
    <property type="evidence" value="ECO:0007669"/>
    <property type="project" value="UniProtKB-UniRule"/>
</dbReference>
<dbReference type="GO" id="GO:0034755">
    <property type="term" value="P:iron ion transmembrane transport"/>
    <property type="evidence" value="ECO:0007669"/>
    <property type="project" value="TreeGrafter"/>
</dbReference>
<dbReference type="HAMAP" id="MF_00221">
    <property type="entry name" value="NRAMP"/>
    <property type="match status" value="1"/>
</dbReference>
<dbReference type="InterPro" id="IPR001046">
    <property type="entry name" value="NRAMP_fam"/>
</dbReference>
<dbReference type="NCBIfam" id="TIGR01197">
    <property type="entry name" value="nramp"/>
    <property type="match status" value="1"/>
</dbReference>
<dbReference type="NCBIfam" id="NF037982">
    <property type="entry name" value="Nramp_1"/>
    <property type="match status" value="1"/>
</dbReference>
<dbReference type="NCBIfam" id="NF001923">
    <property type="entry name" value="PRK00701.1"/>
    <property type="match status" value="1"/>
</dbReference>
<dbReference type="PANTHER" id="PTHR11706:SF33">
    <property type="entry name" value="NATURAL RESISTANCE-ASSOCIATED MACROPHAGE PROTEIN 2"/>
    <property type="match status" value="1"/>
</dbReference>
<dbReference type="PANTHER" id="PTHR11706">
    <property type="entry name" value="SOLUTE CARRIER PROTEIN FAMILY 11 MEMBER"/>
    <property type="match status" value="1"/>
</dbReference>
<dbReference type="Pfam" id="PF01566">
    <property type="entry name" value="Nramp"/>
    <property type="match status" value="1"/>
</dbReference>
<dbReference type="PRINTS" id="PR00447">
    <property type="entry name" value="NATRESASSCMP"/>
</dbReference>
<accession>Q93V04</accession>